<reference key="1">
    <citation type="journal article" date="2003" name="Plant Syst. Evol.">
        <title>The chloroplast genome of the 'basal' angiosperm Calycanthus fertilis -- structural and phylogenetic analyses.</title>
        <authorList>
            <person name="Goremykin V."/>
            <person name="Hirsch-Ernst K.I."/>
            <person name="Woelfl S."/>
            <person name="Hellwig F.H."/>
        </authorList>
    </citation>
    <scope>NUCLEOTIDE SEQUENCE [LARGE SCALE GENOMIC DNA]</scope>
</reference>
<accession>Q7YJU4</accession>
<proteinExistence type="inferred from homology"/>
<dbReference type="EMBL" id="AJ428413">
    <property type="protein sequence ID" value="CAD28755.1"/>
    <property type="molecule type" value="Genomic_DNA"/>
</dbReference>
<dbReference type="RefSeq" id="NP_862788.1">
    <property type="nucleotide sequence ID" value="NC_004993.1"/>
</dbReference>
<dbReference type="SMR" id="Q7YJU4"/>
<dbReference type="GeneID" id="2597982"/>
<dbReference type="GO" id="GO:0009507">
    <property type="term" value="C:chloroplast"/>
    <property type="evidence" value="ECO:0007669"/>
    <property type="project" value="UniProtKB-SubCell"/>
</dbReference>
<dbReference type="GO" id="GO:0005829">
    <property type="term" value="C:cytosol"/>
    <property type="evidence" value="ECO:0007669"/>
    <property type="project" value="TreeGrafter"/>
</dbReference>
<dbReference type="GO" id="GO:0043022">
    <property type="term" value="F:ribosome binding"/>
    <property type="evidence" value="ECO:0007669"/>
    <property type="project" value="UniProtKB-UniRule"/>
</dbReference>
<dbReference type="GO" id="GO:0019843">
    <property type="term" value="F:rRNA binding"/>
    <property type="evidence" value="ECO:0007669"/>
    <property type="project" value="UniProtKB-UniRule"/>
</dbReference>
<dbReference type="GO" id="GO:0003743">
    <property type="term" value="F:translation initiation factor activity"/>
    <property type="evidence" value="ECO:0007669"/>
    <property type="project" value="UniProtKB-UniRule"/>
</dbReference>
<dbReference type="CDD" id="cd04451">
    <property type="entry name" value="S1_IF1"/>
    <property type="match status" value="1"/>
</dbReference>
<dbReference type="FunFam" id="2.40.50.140:FF:000019">
    <property type="entry name" value="Translation initiation factor IF-1, chloroplastic"/>
    <property type="match status" value="1"/>
</dbReference>
<dbReference type="Gene3D" id="2.40.50.140">
    <property type="entry name" value="Nucleic acid-binding proteins"/>
    <property type="match status" value="1"/>
</dbReference>
<dbReference type="HAMAP" id="MF_00075">
    <property type="entry name" value="IF_1"/>
    <property type="match status" value="1"/>
</dbReference>
<dbReference type="InterPro" id="IPR012340">
    <property type="entry name" value="NA-bd_OB-fold"/>
</dbReference>
<dbReference type="InterPro" id="IPR006196">
    <property type="entry name" value="RNA-binding_domain_S1_IF1"/>
</dbReference>
<dbReference type="InterPro" id="IPR003029">
    <property type="entry name" value="S1_domain"/>
</dbReference>
<dbReference type="InterPro" id="IPR004368">
    <property type="entry name" value="TIF_IF1"/>
</dbReference>
<dbReference type="NCBIfam" id="TIGR00008">
    <property type="entry name" value="infA"/>
    <property type="match status" value="1"/>
</dbReference>
<dbReference type="PANTHER" id="PTHR33370">
    <property type="entry name" value="TRANSLATION INITIATION FACTOR IF-1, CHLOROPLASTIC"/>
    <property type="match status" value="1"/>
</dbReference>
<dbReference type="PANTHER" id="PTHR33370:SF1">
    <property type="entry name" value="TRANSLATION INITIATION FACTOR IF-1, CHLOROPLASTIC"/>
    <property type="match status" value="1"/>
</dbReference>
<dbReference type="Pfam" id="PF01176">
    <property type="entry name" value="eIF-1a"/>
    <property type="match status" value="1"/>
</dbReference>
<dbReference type="SMART" id="SM00316">
    <property type="entry name" value="S1"/>
    <property type="match status" value="1"/>
</dbReference>
<dbReference type="SUPFAM" id="SSF50249">
    <property type="entry name" value="Nucleic acid-binding proteins"/>
    <property type="match status" value="1"/>
</dbReference>
<dbReference type="PROSITE" id="PS50832">
    <property type="entry name" value="S1_IF1_TYPE"/>
    <property type="match status" value="1"/>
</dbReference>
<keyword id="KW-0150">Chloroplast</keyword>
<keyword id="KW-0396">Initiation factor</keyword>
<keyword id="KW-0934">Plastid</keyword>
<keyword id="KW-0648">Protein biosynthesis</keyword>
<keyword id="KW-0694">RNA-binding</keyword>
<keyword id="KW-0699">rRNA-binding</keyword>
<evidence type="ECO:0000255" key="1">
    <source>
        <dbReference type="HAMAP-Rule" id="MF_00075"/>
    </source>
</evidence>
<geneLocation type="chloroplast"/>
<organism>
    <name type="scientific">Calycanthus floridus var. glaucus</name>
    <name type="common">Eastern sweetshrub</name>
    <name type="synonym">Calycanthus fertilis var. ferax</name>
    <dbReference type="NCBI Taxonomy" id="212734"/>
    <lineage>
        <taxon>Eukaryota</taxon>
        <taxon>Viridiplantae</taxon>
        <taxon>Streptophyta</taxon>
        <taxon>Embryophyta</taxon>
        <taxon>Tracheophyta</taxon>
        <taxon>Spermatophyta</taxon>
        <taxon>Magnoliopsida</taxon>
        <taxon>Magnoliidae</taxon>
        <taxon>Laurales</taxon>
        <taxon>Calycanthaceae</taxon>
        <taxon>Calycanthus</taxon>
    </lineage>
</organism>
<name>IF1C_CALFG</name>
<comment type="function">
    <text evidence="1">One of the essential components for the initiation of protein synthesis. Stabilizes the binding of IF-2 and IF-3 on the 30S subunit to which N-formylmethionyl-tRNA(fMet) subsequently binds. Helps modulate mRNA selection, yielding the 30S pre-initiation complex (PIC). Upon addition of the 50S ribosomal subunit IF-1, IF-2 and IF-3 are released leaving the mature 70S translation initiation complex.</text>
</comment>
<comment type="subunit">
    <text evidence="1">Component of the 30S ribosomal translation pre-initiation complex which assembles on the 30S ribosome in the order IF-2 and IF-3, IF-1 and N-formylmethionyl-tRNA(fMet); mRNA recruitment can occur at any time during PIC assembly.</text>
</comment>
<comment type="subcellular location">
    <subcellularLocation>
        <location evidence="1">Plastid</location>
        <location evidence="1">Chloroplast</location>
    </subcellularLocation>
</comment>
<comment type="similarity">
    <text evidence="1">Belongs to the IF-1 family.</text>
</comment>
<gene>
    <name evidence="1" type="primary">infA</name>
</gene>
<feature type="chain" id="PRO_0000095923" description="Translation initiation factor IF-1, chloroplastic">
    <location>
        <begin position="1"/>
        <end position="77"/>
    </location>
</feature>
<feature type="domain" description="S1-like" evidence="1">
    <location>
        <begin position="1"/>
        <end position="71"/>
    </location>
</feature>
<sequence>MKEQKLIHEGLITESLPNGMFRVRLDNEDLILGYVSGRIRRSFIRILPGDRVKIEVSSYDSTRGRIIYRLRNKDSND</sequence>
<protein>
    <recommendedName>
        <fullName evidence="1">Translation initiation factor IF-1, chloroplastic</fullName>
    </recommendedName>
</protein>